<gene>
    <name type="primary">MED27</name>
    <name type="ORF">AAEL007482</name>
</gene>
<sequence length="295" mass="34076">MNLEPINNALSHLRMLRSSVGQVFETLGNGVRAEHGEEGKEQKFLQELQELLNGVNSNLREFETCINDLTPPQAPFNLANTAYLSLETNLERQALYPHLVQSYKWHDKLHEYSTFASVLLQQNSLKRSYYTNTKRRRSLPSSHLATPQTVDNLIGSIHFPNMNLKIVRPFMTNAILHITIARVLRAAVILKGLLIEWVTVKGFDESLLDGVDEHWTVSRHQVFRKVQDHAHSAMLHFFSPTLPDLAIRSFITWFRSYLTLFADPCKKCGKHLHNTLPPTWRDLRTLEPYHEECKQ</sequence>
<feature type="chain" id="PRO_0000305016" description="Mediator of RNA polymerase II transcription subunit 27">
    <location>
        <begin position="1"/>
        <end position="295"/>
    </location>
</feature>
<reference key="1">
    <citation type="journal article" date="2007" name="Science">
        <title>Genome sequence of Aedes aegypti, a major arbovirus vector.</title>
        <authorList>
            <person name="Nene V."/>
            <person name="Wortman J.R."/>
            <person name="Lawson D."/>
            <person name="Haas B.J."/>
            <person name="Kodira C.D."/>
            <person name="Tu Z.J."/>
            <person name="Loftus B.J."/>
            <person name="Xi Z."/>
            <person name="Megy K."/>
            <person name="Grabherr M."/>
            <person name="Ren Q."/>
            <person name="Zdobnov E.M."/>
            <person name="Lobo N.F."/>
            <person name="Campbell K.S."/>
            <person name="Brown S.E."/>
            <person name="Bonaldo M.F."/>
            <person name="Zhu J."/>
            <person name="Sinkins S.P."/>
            <person name="Hogenkamp D.G."/>
            <person name="Amedeo P."/>
            <person name="Arensburger P."/>
            <person name="Atkinson P.W."/>
            <person name="Bidwell S.L."/>
            <person name="Biedler J."/>
            <person name="Birney E."/>
            <person name="Bruggner R.V."/>
            <person name="Costas J."/>
            <person name="Coy M.R."/>
            <person name="Crabtree J."/>
            <person name="Crawford M."/>
            <person name="DeBruyn B."/>
            <person name="DeCaprio D."/>
            <person name="Eiglmeier K."/>
            <person name="Eisenstadt E."/>
            <person name="El-Dorry H."/>
            <person name="Gelbart W.M."/>
            <person name="Gomes S.L."/>
            <person name="Hammond M."/>
            <person name="Hannick L.I."/>
            <person name="Hogan J.R."/>
            <person name="Holmes M.H."/>
            <person name="Jaffe D."/>
            <person name="Johnston S.J."/>
            <person name="Kennedy R.C."/>
            <person name="Koo H."/>
            <person name="Kravitz S."/>
            <person name="Kriventseva E.V."/>
            <person name="Kulp D."/>
            <person name="Labutti K."/>
            <person name="Lee E."/>
            <person name="Li S."/>
            <person name="Lovin D.D."/>
            <person name="Mao C."/>
            <person name="Mauceli E."/>
            <person name="Menck C.F."/>
            <person name="Miller J.R."/>
            <person name="Montgomery P."/>
            <person name="Mori A."/>
            <person name="Nascimento A.L."/>
            <person name="Naveira H.F."/>
            <person name="Nusbaum C."/>
            <person name="O'Leary S.B."/>
            <person name="Orvis J."/>
            <person name="Pertea M."/>
            <person name="Quesneville H."/>
            <person name="Reidenbach K.R."/>
            <person name="Rogers Y.-H.C."/>
            <person name="Roth C.W."/>
            <person name="Schneider J.R."/>
            <person name="Schatz M."/>
            <person name="Shumway M."/>
            <person name="Stanke M."/>
            <person name="Stinson E.O."/>
            <person name="Tubio J.M.C."/>
            <person name="Vanzee J.P."/>
            <person name="Verjovski-Almeida S."/>
            <person name="Werner D."/>
            <person name="White O.R."/>
            <person name="Wyder S."/>
            <person name="Zeng Q."/>
            <person name="Zhao Q."/>
            <person name="Zhao Y."/>
            <person name="Hill C.A."/>
            <person name="Raikhel A.S."/>
            <person name="Soares M.B."/>
            <person name="Knudson D.L."/>
            <person name="Lee N.H."/>
            <person name="Galagan J."/>
            <person name="Salzberg S.L."/>
            <person name="Paulsen I.T."/>
            <person name="Dimopoulos G."/>
            <person name="Collins F.H."/>
            <person name="Bruce B."/>
            <person name="Fraser-Liggett C.M."/>
            <person name="Severson D.W."/>
        </authorList>
    </citation>
    <scope>NUCLEOTIDE SEQUENCE [LARGE SCALE GENOMIC DNA]</scope>
    <source>
        <strain>LVPib12</strain>
    </source>
</reference>
<evidence type="ECO:0000250" key="1"/>
<evidence type="ECO:0000305" key="2"/>
<comment type="function">
    <text evidence="1">Component of the Mediator complex, a coactivator involved in the regulated transcription of nearly all RNA polymerase II-dependent genes. Mediator functions as a bridge to convey information from gene-specific regulatory proteins to the basal RNA polymerase II transcription machinery. Mediator is recruited to promoters by direct interactions with regulatory proteins and serves as a scaffold for the assembly of a functional preinitiation complex with RNA polymerase II and the general transcription factors (By similarity).</text>
</comment>
<comment type="subunit">
    <text evidence="1">Component of the Mediator complex.</text>
</comment>
<comment type="subcellular location">
    <subcellularLocation>
        <location evidence="1">Nucleus</location>
    </subcellularLocation>
</comment>
<comment type="similarity">
    <text evidence="2">Belongs to the Mediator complex subunit 27 family.</text>
</comment>
<accession>Q171Y8</accession>
<keyword id="KW-0010">Activator</keyword>
<keyword id="KW-0539">Nucleus</keyword>
<keyword id="KW-1185">Reference proteome</keyword>
<keyword id="KW-0804">Transcription</keyword>
<keyword id="KW-0805">Transcription regulation</keyword>
<proteinExistence type="inferred from homology"/>
<organism>
    <name type="scientific">Aedes aegypti</name>
    <name type="common">Yellowfever mosquito</name>
    <name type="synonym">Culex aegypti</name>
    <dbReference type="NCBI Taxonomy" id="7159"/>
    <lineage>
        <taxon>Eukaryota</taxon>
        <taxon>Metazoa</taxon>
        <taxon>Ecdysozoa</taxon>
        <taxon>Arthropoda</taxon>
        <taxon>Hexapoda</taxon>
        <taxon>Insecta</taxon>
        <taxon>Pterygota</taxon>
        <taxon>Neoptera</taxon>
        <taxon>Endopterygota</taxon>
        <taxon>Diptera</taxon>
        <taxon>Nematocera</taxon>
        <taxon>Culicoidea</taxon>
        <taxon>Culicidae</taxon>
        <taxon>Culicinae</taxon>
        <taxon>Aedini</taxon>
        <taxon>Aedes</taxon>
        <taxon>Stegomyia</taxon>
    </lineage>
</organism>
<dbReference type="EMBL" id="CH477443">
    <property type="protein sequence ID" value="EAT40798.1"/>
    <property type="molecule type" value="Genomic_DNA"/>
</dbReference>
<dbReference type="SMR" id="Q171Y8"/>
<dbReference type="FunCoup" id="Q171Y8">
    <property type="interactions" value="1910"/>
</dbReference>
<dbReference type="STRING" id="7159.Q171Y8"/>
<dbReference type="PaxDb" id="7159-AAEL007482-PA"/>
<dbReference type="EnsemblMetazoa" id="AAEL007482-RA">
    <property type="protein sequence ID" value="AAEL007482-PA"/>
    <property type="gene ID" value="AAEL007482"/>
</dbReference>
<dbReference type="GeneID" id="5569226"/>
<dbReference type="KEGG" id="aag:5569226"/>
<dbReference type="CTD" id="9442"/>
<dbReference type="VEuPathDB" id="VectorBase:AAEL007482"/>
<dbReference type="eggNOG" id="ENOG502QS6H">
    <property type="taxonomic scope" value="Eukaryota"/>
</dbReference>
<dbReference type="HOGENOM" id="CLU_056015_0_0_1"/>
<dbReference type="InParanoid" id="Q171Y8"/>
<dbReference type="OMA" id="FHEDCRN"/>
<dbReference type="OrthoDB" id="1868004at2759"/>
<dbReference type="PhylomeDB" id="Q171Y8"/>
<dbReference type="Proteomes" id="UP000008820">
    <property type="component" value="Chromosome 1"/>
</dbReference>
<dbReference type="Proteomes" id="UP000682892">
    <property type="component" value="Unassembled WGS sequence"/>
</dbReference>
<dbReference type="GO" id="GO:0016592">
    <property type="term" value="C:mediator complex"/>
    <property type="evidence" value="ECO:0007669"/>
    <property type="project" value="InterPro"/>
</dbReference>
<dbReference type="GO" id="GO:0003713">
    <property type="term" value="F:transcription coactivator activity"/>
    <property type="evidence" value="ECO:0007669"/>
    <property type="project" value="TreeGrafter"/>
</dbReference>
<dbReference type="GO" id="GO:0006357">
    <property type="term" value="P:regulation of transcription by RNA polymerase II"/>
    <property type="evidence" value="ECO:0007669"/>
    <property type="project" value="TreeGrafter"/>
</dbReference>
<dbReference type="InterPro" id="IPR021627">
    <property type="entry name" value="Mediator_Med27"/>
</dbReference>
<dbReference type="PANTHER" id="PTHR13130">
    <property type="entry name" value="34 KDA TRANSCRIPTIONAL CO-ACTIVATOR-RELATED"/>
    <property type="match status" value="1"/>
</dbReference>
<dbReference type="PANTHER" id="PTHR13130:SF4">
    <property type="entry name" value="MEDIATOR OF RNA POLYMERASE II TRANSCRIPTION SUBUNIT 27"/>
    <property type="match status" value="1"/>
</dbReference>
<dbReference type="Pfam" id="PF11571">
    <property type="entry name" value="Med27"/>
    <property type="match status" value="1"/>
</dbReference>
<protein>
    <recommendedName>
        <fullName>Mediator of RNA polymerase II transcription subunit 27</fullName>
    </recommendedName>
    <alternativeName>
        <fullName>Mediator complex subunit 27</fullName>
    </alternativeName>
</protein>
<name>MED27_AEDAE</name>